<proteinExistence type="inferred from homology"/>
<gene>
    <name evidence="1" type="primary">dcun1d4</name>
    <name type="ORF">si:ch211-14g4.1</name>
</gene>
<comment type="function">
    <text evidence="1">Contributes to the neddylation of all cullins by transferring NEDD8 from N-terminally acetylated NEDD8-conjugating E2s enzyme to different cullin C-terminal domain-RBX complexes.</text>
</comment>
<comment type="subunit">
    <text evidence="1">May interact (via the DCUN1 domain) with unneddylated cullins.</text>
</comment>
<comment type="subcellular location">
    <subcellularLocation>
        <location evidence="1">Nucleus</location>
    </subcellularLocation>
</comment>
<comment type="domain">
    <text evidence="1">The DCUN1 domain, also known as PONY domain, may mediate the interaction with cullins.</text>
</comment>
<comment type="sequence caution" evidence="4">
    <conflict type="erroneous initiation">
        <sequence resource="EMBL-CDS" id="CAI11616"/>
    </conflict>
</comment>
<organism>
    <name type="scientific">Danio rerio</name>
    <name type="common">Zebrafish</name>
    <name type="synonym">Brachydanio rerio</name>
    <dbReference type="NCBI Taxonomy" id="7955"/>
    <lineage>
        <taxon>Eukaryota</taxon>
        <taxon>Metazoa</taxon>
        <taxon>Chordata</taxon>
        <taxon>Craniata</taxon>
        <taxon>Vertebrata</taxon>
        <taxon>Euteleostomi</taxon>
        <taxon>Actinopterygii</taxon>
        <taxon>Neopterygii</taxon>
        <taxon>Teleostei</taxon>
        <taxon>Ostariophysi</taxon>
        <taxon>Cypriniformes</taxon>
        <taxon>Danionidae</taxon>
        <taxon>Danioninae</taxon>
        <taxon>Danio</taxon>
    </lineage>
</organism>
<feature type="chain" id="PRO_0000129505" description="DCN1-like protein 4">
    <location>
        <begin position="1"/>
        <end position="280"/>
    </location>
</feature>
<feature type="domain" description="DCUN1" evidence="2">
    <location>
        <begin position="89"/>
        <end position="275"/>
    </location>
</feature>
<feature type="region of interest" description="Disordered" evidence="3">
    <location>
        <begin position="37"/>
        <end position="71"/>
    </location>
</feature>
<accession>Q5RHX6</accession>
<name>DCNL4_DANRE</name>
<reference key="1">
    <citation type="journal article" date="2013" name="Nature">
        <title>The zebrafish reference genome sequence and its relationship to the human genome.</title>
        <authorList>
            <person name="Howe K."/>
            <person name="Clark M.D."/>
            <person name="Torroja C.F."/>
            <person name="Torrance J."/>
            <person name="Berthelot C."/>
            <person name="Muffato M."/>
            <person name="Collins J.E."/>
            <person name="Humphray S."/>
            <person name="McLaren K."/>
            <person name="Matthews L."/>
            <person name="McLaren S."/>
            <person name="Sealy I."/>
            <person name="Caccamo M."/>
            <person name="Churcher C."/>
            <person name="Scott C."/>
            <person name="Barrett J.C."/>
            <person name="Koch R."/>
            <person name="Rauch G.J."/>
            <person name="White S."/>
            <person name="Chow W."/>
            <person name="Kilian B."/>
            <person name="Quintais L.T."/>
            <person name="Guerra-Assuncao J.A."/>
            <person name="Zhou Y."/>
            <person name="Gu Y."/>
            <person name="Yen J."/>
            <person name="Vogel J.H."/>
            <person name="Eyre T."/>
            <person name="Redmond S."/>
            <person name="Banerjee R."/>
            <person name="Chi J."/>
            <person name="Fu B."/>
            <person name="Langley E."/>
            <person name="Maguire S.F."/>
            <person name="Laird G.K."/>
            <person name="Lloyd D."/>
            <person name="Kenyon E."/>
            <person name="Donaldson S."/>
            <person name="Sehra H."/>
            <person name="Almeida-King J."/>
            <person name="Loveland J."/>
            <person name="Trevanion S."/>
            <person name="Jones M."/>
            <person name="Quail M."/>
            <person name="Willey D."/>
            <person name="Hunt A."/>
            <person name="Burton J."/>
            <person name="Sims S."/>
            <person name="McLay K."/>
            <person name="Plumb B."/>
            <person name="Davis J."/>
            <person name="Clee C."/>
            <person name="Oliver K."/>
            <person name="Clark R."/>
            <person name="Riddle C."/>
            <person name="Elliot D."/>
            <person name="Threadgold G."/>
            <person name="Harden G."/>
            <person name="Ware D."/>
            <person name="Begum S."/>
            <person name="Mortimore B."/>
            <person name="Kerry G."/>
            <person name="Heath P."/>
            <person name="Phillimore B."/>
            <person name="Tracey A."/>
            <person name="Corby N."/>
            <person name="Dunn M."/>
            <person name="Johnson C."/>
            <person name="Wood J."/>
            <person name="Clark S."/>
            <person name="Pelan S."/>
            <person name="Griffiths G."/>
            <person name="Smith M."/>
            <person name="Glithero R."/>
            <person name="Howden P."/>
            <person name="Barker N."/>
            <person name="Lloyd C."/>
            <person name="Stevens C."/>
            <person name="Harley J."/>
            <person name="Holt K."/>
            <person name="Panagiotidis G."/>
            <person name="Lovell J."/>
            <person name="Beasley H."/>
            <person name="Henderson C."/>
            <person name="Gordon D."/>
            <person name="Auger K."/>
            <person name="Wright D."/>
            <person name="Collins J."/>
            <person name="Raisen C."/>
            <person name="Dyer L."/>
            <person name="Leung K."/>
            <person name="Robertson L."/>
            <person name="Ambridge K."/>
            <person name="Leongamornlert D."/>
            <person name="McGuire S."/>
            <person name="Gilderthorp R."/>
            <person name="Griffiths C."/>
            <person name="Manthravadi D."/>
            <person name="Nichol S."/>
            <person name="Barker G."/>
            <person name="Whitehead S."/>
            <person name="Kay M."/>
            <person name="Brown J."/>
            <person name="Murnane C."/>
            <person name="Gray E."/>
            <person name="Humphries M."/>
            <person name="Sycamore N."/>
            <person name="Barker D."/>
            <person name="Saunders D."/>
            <person name="Wallis J."/>
            <person name="Babbage A."/>
            <person name="Hammond S."/>
            <person name="Mashreghi-Mohammadi M."/>
            <person name="Barr L."/>
            <person name="Martin S."/>
            <person name="Wray P."/>
            <person name="Ellington A."/>
            <person name="Matthews N."/>
            <person name="Ellwood M."/>
            <person name="Woodmansey R."/>
            <person name="Clark G."/>
            <person name="Cooper J."/>
            <person name="Tromans A."/>
            <person name="Grafham D."/>
            <person name="Skuce C."/>
            <person name="Pandian R."/>
            <person name="Andrews R."/>
            <person name="Harrison E."/>
            <person name="Kimberley A."/>
            <person name="Garnett J."/>
            <person name="Fosker N."/>
            <person name="Hall R."/>
            <person name="Garner P."/>
            <person name="Kelly D."/>
            <person name="Bird C."/>
            <person name="Palmer S."/>
            <person name="Gehring I."/>
            <person name="Berger A."/>
            <person name="Dooley C.M."/>
            <person name="Ersan-Urun Z."/>
            <person name="Eser C."/>
            <person name="Geiger H."/>
            <person name="Geisler M."/>
            <person name="Karotki L."/>
            <person name="Kirn A."/>
            <person name="Konantz J."/>
            <person name="Konantz M."/>
            <person name="Oberlander M."/>
            <person name="Rudolph-Geiger S."/>
            <person name="Teucke M."/>
            <person name="Lanz C."/>
            <person name="Raddatz G."/>
            <person name="Osoegawa K."/>
            <person name="Zhu B."/>
            <person name="Rapp A."/>
            <person name="Widaa S."/>
            <person name="Langford C."/>
            <person name="Yang F."/>
            <person name="Schuster S.C."/>
            <person name="Carter N.P."/>
            <person name="Harrow J."/>
            <person name="Ning Z."/>
            <person name="Herrero J."/>
            <person name="Searle S.M."/>
            <person name="Enright A."/>
            <person name="Geisler R."/>
            <person name="Plasterk R.H."/>
            <person name="Lee C."/>
            <person name="Westerfield M."/>
            <person name="de Jong P.J."/>
            <person name="Zon L.I."/>
            <person name="Postlethwait J.H."/>
            <person name="Nusslein-Volhard C."/>
            <person name="Hubbard T.J."/>
            <person name="Roest Crollius H."/>
            <person name="Rogers J."/>
            <person name="Stemple D.L."/>
        </authorList>
    </citation>
    <scope>NUCLEOTIDE SEQUENCE [LARGE SCALE GENOMIC DNA]</scope>
    <source>
        <strain>Tuebingen</strain>
    </source>
</reference>
<evidence type="ECO:0000250" key="1">
    <source>
        <dbReference type="UniProtKB" id="Q92564"/>
    </source>
</evidence>
<evidence type="ECO:0000255" key="2">
    <source>
        <dbReference type="PROSITE-ProRule" id="PRU00574"/>
    </source>
</evidence>
<evidence type="ECO:0000256" key="3">
    <source>
        <dbReference type="SAM" id="MobiDB-lite"/>
    </source>
</evidence>
<evidence type="ECO:0000305" key="4"/>
<protein>
    <recommendedName>
        <fullName>DCN1-like protein 4</fullName>
        <shortName evidence="1">DCNL4</shortName>
    </recommendedName>
    <alternativeName>
        <fullName>DCUN1 domain-containing protein 4</fullName>
    </alternativeName>
    <alternativeName>
        <fullName>Defective in cullin neddylation protein 1-like protein 4</fullName>
    </alternativeName>
</protein>
<keyword id="KW-0539">Nucleus</keyword>
<keyword id="KW-1185">Reference proteome</keyword>
<sequence>MHSDASNFQLNSHLSTLASIHKIYHTLHRLNLTEDVGPESHGTACCSRAMPPRKKRRPTAGDDLSAKKSRQDNVYRKQEALQIQEAEAFSSKRCLEWFYEYAGCDDVVGPEGMEKFCEDIGVEPENVVMLVLAWKLDAQSMGYFTLQEWLKGMGSLQCDSTEKLRNSLDYLRSVLNDATSFKLIYRYAFDFAREKDQRSLDLNTAKCMLGLLLGKTWPLFPVFNQFLEQSKYKVINKDQWCNVLEFSRTINLDLSNYDEDGAWPVLLDEFVEWYKDREMS</sequence>
<dbReference type="EMBL" id="BX323889">
    <property type="protein sequence ID" value="CAI11616.1"/>
    <property type="status" value="ALT_INIT"/>
    <property type="molecule type" value="Genomic_DNA"/>
</dbReference>
<dbReference type="SMR" id="Q5RHX6"/>
<dbReference type="FunCoup" id="Q5RHX6">
    <property type="interactions" value="703"/>
</dbReference>
<dbReference type="STRING" id="7955.ENSDARP00000114939"/>
<dbReference type="PaxDb" id="7955-ENSDARP00000114939"/>
<dbReference type="AGR" id="ZFIN:ZDB-GENE-041014-248"/>
<dbReference type="ZFIN" id="ZDB-GENE-041014-248">
    <property type="gene designation" value="dcun1d4"/>
</dbReference>
<dbReference type="eggNOG" id="KOG3077">
    <property type="taxonomic scope" value="Eukaryota"/>
</dbReference>
<dbReference type="InParanoid" id="Q5RHX6"/>
<dbReference type="Reactome" id="R-DRE-8951664">
    <property type="pathway name" value="Neddylation"/>
</dbReference>
<dbReference type="PRO" id="PR:Q5RHX6"/>
<dbReference type="Proteomes" id="UP000000437">
    <property type="component" value="Unplaced"/>
</dbReference>
<dbReference type="GO" id="GO:0005634">
    <property type="term" value="C:nucleus"/>
    <property type="evidence" value="ECO:0000250"/>
    <property type="project" value="UniProtKB"/>
</dbReference>
<dbReference type="GO" id="GO:0000151">
    <property type="term" value="C:ubiquitin ligase complex"/>
    <property type="evidence" value="ECO:0000318"/>
    <property type="project" value="GO_Central"/>
</dbReference>
<dbReference type="GO" id="GO:0097602">
    <property type="term" value="F:cullin family protein binding"/>
    <property type="evidence" value="ECO:0000250"/>
    <property type="project" value="UniProtKB"/>
</dbReference>
<dbReference type="GO" id="GO:0031624">
    <property type="term" value="F:ubiquitin conjugating enzyme binding"/>
    <property type="evidence" value="ECO:0000318"/>
    <property type="project" value="GO_Central"/>
</dbReference>
<dbReference type="GO" id="GO:0032182">
    <property type="term" value="F:ubiquitin-like protein binding"/>
    <property type="evidence" value="ECO:0000318"/>
    <property type="project" value="GO_Central"/>
</dbReference>
<dbReference type="GO" id="GO:2000436">
    <property type="term" value="P:positive regulation of protein neddylation"/>
    <property type="evidence" value="ECO:0000250"/>
    <property type="project" value="UniProtKB"/>
</dbReference>
<dbReference type="GO" id="GO:0045116">
    <property type="term" value="P:protein neddylation"/>
    <property type="evidence" value="ECO:0000318"/>
    <property type="project" value="GO_Central"/>
</dbReference>
<dbReference type="FunFam" id="1.10.238.10:FF:000041">
    <property type="entry name" value="DCN1-like protein"/>
    <property type="match status" value="1"/>
</dbReference>
<dbReference type="FunFam" id="1.10.238.200:FF:000002">
    <property type="entry name" value="DCN1-like protein"/>
    <property type="match status" value="1"/>
</dbReference>
<dbReference type="Gene3D" id="1.10.238.200">
    <property type="entry name" value="Cullin, PONY binding domain"/>
    <property type="match status" value="1"/>
</dbReference>
<dbReference type="Gene3D" id="1.10.238.10">
    <property type="entry name" value="EF-hand"/>
    <property type="match status" value="1"/>
</dbReference>
<dbReference type="InterPro" id="IPR014764">
    <property type="entry name" value="DCN-prot"/>
</dbReference>
<dbReference type="InterPro" id="IPR042460">
    <property type="entry name" value="DCN1-like_PONY"/>
</dbReference>
<dbReference type="InterPro" id="IPR005176">
    <property type="entry name" value="PONY_dom"/>
</dbReference>
<dbReference type="PANTHER" id="PTHR12281:SF8">
    <property type="entry name" value="DCN1-LIKE PROTEIN 4"/>
    <property type="match status" value="1"/>
</dbReference>
<dbReference type="PANTHER" id="PTHR12281">
    <property type="entry name" value="RP42 RELATED"/>
    <property type="match status" value="1"/>
</dbReference>
<dbReference type="Pfam" id="PF03556">
    <property type="entry name" value="Cullin_binding"/>
    <property type="match status" value="1"/>
</dbReference>
<dbReference type="PROSITE" id="PS51229">
    <property type="entry name" value="DCUN1"/>
    <property type="match status" value="1"/>
</dbReference>